<evidence type="ECO:0000255" key="1">
    <source>
        <dbReference type="HAMAP-Rule" id="MF_00196"/>
    </source>
</evidence>
<accession>Q2FW96</accession>
<reference key="1">
    <citation type="book" date="2006" name="Gram positive pathogens, 2nd edition">
        <title>The Staphylococcus aureus NCTC 8325 genome.</title>
        <editorList>
            <person name="Fischetti V."/>
            <person name="Novick R."/>
            <person name="Ferretti J."/>
            <person name="Portnoy D."/>
            <person name="Rood J."/>
        </editorList>
        <authorList>
            <person name="Gillaspy A.F."/>
            <person name="Worrell V."/>
            <person name="Orvis J."/>
            <person name="Roe B.A."/>
            <person name="Dyer D.W."/>
            <person name="Iandolo J.J."/>
        </authorList>
    </citation>
    <scope>NUCLEOTIDE SEQUENCE [LARGE SCALE GENOMIC DNA]</scope>
    <source>
        <strain>NCTC 8325 / PS 47</strain>
    </source>
</reference>
<dbReference type="EC" id="1.1.1.17" evidence="1"/>
<dbReference type="EMBL" id="CP000253">
    <property type="protein sequence ID" value="ABD31432.1"/>
    <property type="molecule type" value="Genomic_DNA"/>
</dbReference>
<dbReference type="RefSeq" id="WP_000648719.1">
    <property type="nucleotide sequence ID" value="NZ_LS483365.1"/>
</dbReference>
<dbReference type="RefSeq" id="YP_500879.1">
    <property type="nucleotide sequence ID" value="NC_007795.1"/>
</dbReference>
<dbReference type="PDB" id="5JNM">
    <property type="method" value="X-ray"/>
    <property type="resolution" value="1.70 A"/>
    <property type="chains" value="A=1-368"/>
</dbReference>
<dbReference type="PDBsum" id="5JNM"/>
<dbReference type="SMR" id="Q2FW96"/>
<dbReference type="STRING" id="93061.SAOUHSC_02403"/>
<dbReference type="PaxDb" id="1280-SAXN108_2403"/>
<dbReference type="GeneID" id="3919618"/>
<dbReference type="KEGG" id="sao:SAOUHSC_02403"/>
<dbReference type="PATRIC" id="fig|93061.5.peg.2175"/>
<dbReference type="eggNOG" id="COG0246">
    <property type="taxonomic scope" value="Bacteria"/>
</dbReference>
<dbReference type="HOGENOM" id="CLU_036089_2_0_9"/>
<dbReference type="OrthoDB" id="271711at2"/>
<dbReference type="PRO" id="PR:Q2FW96"/>
<dbReference type="Proteomes" id="UP000008816">
    <property type="component" value="Chromosome"/>
</dbReference>
<dbReference type="GO" id="GO:0005829">
    <property type="term" value="C:cytosol"/>
    <property type="evidence" value="ECO:0000318"/>
    <property type="project" value="GO_Central"/>
</dbReference>
<dbReference type="GO" id="GO:0008926">
    <property type="term" value="F:mannitol-1-phosphate 5-dehydrogenase activity"/>
    <property type="evidence" value="ECO:0000318"/>
    <property type="project" value="GO_Central"/>
</dbReference>
<dbReference type="GO" id="GO:0019592">
    <property type="term" value="P:mannitol catabolic process"/>
    <property type="evidence" value="ECO:0000318"/>
    <property type="project" value="GO_Central"/>
</dbReference>
<dbReference type="FunFam" id="3.40.50.720:FF:000316">
    <property type="entry name" value="Mannitol-1-phosphate 5-dehydrogenase"/>
    <property type="match status" value="1"/>
</dbReference>
<dbReference type="Gene3D" id="1.10.1040.10">
    <property type="entry name" value="N-(1-d-carboxylethyl)-l-norvaline Dehydrogenase, domain 2"/>
    <property type="match status" value="1"/>
</dbReference>
<dbReference type="Gene3D" id="3.40.50.720">
    <property type="entry name" value="NAD(P)-binding Rossmann-like Domain"/>
    <property type="match status" value="1"/>
</dbReference>
<dbReference type="HAMAP" id="MF_00196">
    <property type="entry name" value="Mannitol_dehydrog"/>
    <property type="match status" value="1"/>
</dbReference>
<dbReference type="InterPro" id="IPR008927">
    <property type="entry name" value="6-PGluconate_DH-like_C_sf"/>
</dbReference>
<dbReference type="InterPro" id="IPR013328">
    <property type="entry name" value="6PGD_dom2"/>
</dbReference>
<dbReference type="InterPro" id="IPR023028">
    <property type="entry name" value="Mannitol_1_phos_5_DH"/>
</dbReference>
<dbReference type="InterPro" id="IPR000669">
    <property type="entry name" value="Mannitol_DH"/>
</dbReference>
<dbReference type="InterPro" id="IPR013118">
    <property type="entry name" value="Mannitol_DH_C"/>
</dbReference>
<dbReference type="InterPro" id="IPR023027">
    <property type="entry name" value="Mannitol_DH_CS"/>
</dbReference>
<dbReference type="InterPro" id="IPR013131">
    <property type="entry name" value="Mannitol_DH_N"/>
</dbReference>
<dbReference type="InterPro" id="IPR036291">
    <property type="entry name" value="NAD(P)-bd_dom_sf"/>
</dbReference>
<dbReference type="NCBIfam" id="NF002645">
    <property type="entry name" value="PRK02318.1-1"/>
    <property type="match status" value="1"/>
</dbReference>
<dbReference type="NCBIfam" id="NF002652">
    <property type="entry name" value="PRK02318.2-5"/>
    <property type="match status" value="1"/>
</dbReference>
<dbReference type="PANTHER" id="PTHR30524:SF0">
    <property type="entry name" value="ALTRONATE OXIDOREDUCTASE-RELATED"/>
    <property type="match status" value="1"/>
</dbReference>
<dbReference type="PANTHER" id="PTHR30524">
    <property type="entry name" value="MANNITOL-1-PHOSPHATE 5-DEHYDROGENASE"/>
    <property type="match status" value="1"/>
</dbReference>
<dbReference type="Pfam" id="PF01232">
    <property type="entry name" value="Mannitol_dh"/>
    <property type="match status" value="1"/>
</dbReference>
<dbReference type="Pfam" id="PF08125">
    <property type="entry name" value="Mannitol_dh_C"/>
    <property type="match status" value="1"/>
</dbReference>
<dbReference type="PRINTS" id="PR00084">
    <property type="entry name" value="MTLDHDRGNASE"/>
</dbReference>
<dbReference type="SUPFAM" id="SSF48179">
    <property type="entry name" value="6-phosphogluconate dehydrogenase C-terminal domain-like"/>
    <property type="match status" value="1"/>
</dbReference>
<dbReference type="SUPFAM" id="SSF51735">
    <property type="entry name" value="NAD(P)-binding Rossmann-fold domains"/>
    <property type="match status" value="1"/>
</dbReference>
<dbReference type="PROSITE" id="PS00974">
    <property type="entry name" value="MANNITOL_DHGENASE"/>
    <property type="match status" value="1"/>
</dbReference>
<comment type="catalytic activity">
    <reaction evidence="1">
        <text>D-mannitol 1-phosphate + NAD(+) = beta-D-fructose 6-phosphate + NADH + H(+)</text>
        <dbReference type="Rhea" id="RHEA:19661"/>
        <dbReference type="ChEBI" id="CHEBI:15378"/>
        <dbReference type="ChEBI" id="CHEBI:57540"/>
        <dbReference type="ChEBI" id="CHEBI:57634"/>
        <dbReference type="ChEBI" id="CHEBI:57945"/>
        <dbReference type="ChEBI" id="CHEBI:61381"/>
        <dbReference type="EC" id="1.1.1.17"/>
    </reaction>
</comment>
<comment type="similarity">
    <text evidence="1">Belongs to the mannitol dehydrogenase family.</text>
</comment>
<feature type="chain" id="PRO_1000011814" description="Mannitol-1-phosphate 5-dehydrogenase">
    <location>
        <begin position="1"/>
        <end position="368"/>
    </location>
</feature>
<feature type="binding site" evidence="1">
    <location>
        <begin position="3"/>
        <end position="14"/>
    </location>
    <ligand>
        <name>NAD(+)</name>
        <dbReference type="ChEBI" id="CHEBI:57540"/>
    </ligand>
</feature>
<protein>
    <recommendedName>
        <fullName evidence="1">Mannitol-1-phosphate 5-dehydrogenase</fullName>
        <ecNumber evidence="1">1.1.1.17</ecNumber>
    </recommendedName>
</protein>
<gene>
    <name evidence="1" type="primary">mtlD</name>
    <name type="ordered locus">SAOUHSC_02403</name>
</gene>
<keyword id="KW-0002">3D-structure</keyword>
<keyword id="KW-0520">NAD</keyword>
<keyword id="KW-0560">Oxidoreductase</keyword>
<keyword id="KW-1185">Reference proteome</keyword>
<name>MTLD_STAA8</name>
<sequence length="368" mass="40937">MKAVHFGAGNIGRGFIGYILADNNVKVTFADVNEEIINALAHDHQYDVILADESKTTTRVNNVDAINSMQPSEALKQAILEADIITTAVGVNILPIIAKSFAPFLKEKTNHVNIVACENAIMATDTLKKAVLDITGPLGNNIHFANSAVDRIVPLQKNENILDVMVEPFYEWVVEKDAWYGPELNHIKYVDDLTPYIERKLLTVNTGHAYLAYAGKFAGKATVLDAVEDSSIEAGLRRVLAETSQYITNEFDFTEAEQAGYVEKIIDRFNNSYLSDEVTRVGRGTLRKIGPKDRIIKPLTYLYNKDLERTGLLNTAALLLKYDDTADQETVEKNNYIKEHGLKAFLSEYAKVDDGLADEIIEAYNSLS</sequence>
<proteinExistence type="evidence at protein level"/>
<organism>
    <name type="scientific">Staphylococcus aureus (strain NCTC 8325 / PS 47)</name>
    <dbReference type="NCBI Taxonomy" id="93061"/>
    <lineage>
        <taxon>Bacteria</taxon>
        <taxon>Bacillati</taxon>
        <taxon>Bacillota</taxon>
        <taxon>Bacilli</taxon>
        <taxon>Bacillales</taxon>
        <taxon>Staphylococcaceae</taxon>
        <taxon>Staphylococcus</taxon>
    </lineage>
</organism>